<proteinExistence type="evidence at protein level"/>
<organism>
    <name type="scientific">Rattus norvegicus</name>
    <name type="common">Rat</name>
    <dbReference type="NCBI Taxonomy" id="10116"/>
    <lineage>
        <taxon>Eukaryota</taxon>
        <taxon>Metazoa</taxon>
        <taxon>Chordata</taxon>
        <taxon>Craniata</taxon>
        <taxon>Vertebrata</taxon>
        <taxon>Euteleostomi</taxon>
        <taxon>Mammalia</taxon>
        <taxon>Eutheria</taxon>
        <taxon>Euarchontoglires</taxon>
        <taxon>Glires</taxon>
        <taxon>Rodentia</taxon>
        <taxon>Myomorpha</taxon>
        <taxon>Muroidea</taxon>
        <taxon>Muridae</taxon>
        <taxon>Murinae</taxon>
        <taxon>Rattus</taxon>
    </lineage>
</organism>
<accession>P00787</accession>
<keyword id="KW-0002">3D-structure</keyword>
<keyword id="KW-0007">Acetylation</keyword>
<keyword id="KW-1003">Cell membrane</keyword>
<keyword id="KW-0903">Direct protein sequencing</keyword>
<keyword id="KW-1015">Disulfide bond</keyword>
<keyword id="KW-0325">Glycoprotein</keyword>
<keyword id="KW-0378">Hydrolase</keyword>
<keyword id="KW-0458">Lysosome</keyword>
<keyword id="KW-0472">Membrane</keyword>
<keyword id="KW-0645">Protease</keyword>
<keyword id="KW-1185">Reference proteome</keyword>
<keyword id="KW-0964">Secreted</keyword>
<keyword id="KW-0732">Signal</keyword>
<keyword id="KW-0788">Thiol protease</keyword>
<keyword id="KW-0865">Zymogen</keyword>
<name>CATB_RAT</name>
<evidence type="ECO:0000250" key="1">
    <source>
        <dbReference type="UniProtKB" id="A1E295"/>
    </source>
</evidence>
<evidence type="ECO:0000250" key="2">
    <source>
        <dbReference type="UniProtKB" id="P07858"/>
    </source>
</evidence>
<evidence type="ECO:0000250" key="3">
    <source>
        <dbReference type="UniProtKB" id="P10605"/>
    </source>
</evidence>
<evidence type="ECO:0000255" key="4"/>
<evidence type="ECO:0000255" key="5">
    <source>
        <dbReference type="PROSITE-ProRule" id="PRU10088"/>
    </source>
</evidence>
<evidence type="ECO:0000255" key="6">
    <source>
        <dbReference type="PROSITE-ProRule" id="PRU10089"/>
    </source>
</evidence>
<evidence type="ECO:0000255" key="7">
    <source>
        <dbReference type="PROSITE-ProRule" id="PRU10090"/>
    </source>
</evidence>
<evidence type="ECO:0000269" key="8">
    <source>
    </source>
</evidence>
<evidence type="ECO:0000269" key="9">
    <source>
    </source>
</evidence>
<evidence type="ECO:0000269" key="10">
    <source>
    </source>
</evidence>
<evidence type="ECO:0000269" key="11">
    <source>
    </source>
</evidence>
<evidence type="ECO:0000269" key="12">
    <source>
    </source>
</evidence>
<evidence type="ECO:0000303" key="13">
    <source>
    </source>
</evidence>
<evidence type="ECO:0000305" key="14"/>
<evidence type="ECO:0007829" key="15">
    <source>
        <dbReference type="PDB" id="1CPJ"/>
    </source>
</evidence>
<evidence type="ECO:0007829" key="16">
    <source>
        <dbReference type="PDB" id="1CTE"/>
    </source>
</evidence>
<evidence type="ECO:0007829" key="17">
    <source>
        <dbReference type="PDB" id="1MIR"/>
    </source>
</evidence>
<evidence type="ECO:0007829" key="18">
    <source>
        <dbReference type="PDB" id="1THE"/>
    </source>
</evidence>
<feature type="signal peptide" evidence="4">
    <location>
        <begin position="1"/>
        <end position="17"/>
    </location>
</feature>
<feature type="propeptide" id="PRO_0000026153" description="Activation peptide" evidence="8 9">
    <location>
        <begin position="18"/>
        <end position="79"/>
    </location>
</feature>
<feature type="chain" id="PRO_0000026154" description="Cathepsin B">
    <location>
        <begin position="80"/>
        <end position="333"/>
    </location>
</feature>
<feature type="chain" id="PRO_0000026155" description="Cathepsin B light chain" evidence="9">
    <location>
        <begin position="80"/>
        <end position="126"/>
    </location>
</feature>
<feature type="chain" id="PRO_0000026156" description="Cathepsin B heavy chain" evidence="9">
    <location>
        <begin position="129"/>
        <end position="333"/>
    </location>
</feature>
<feature type="propeptide" id="PRO_0000026157" evidence="2">
    <location>
        <begin position="334"/>
        <end position="339"/>
    </location>
</feature>
<feature type="active site" evidence="5 10 12">
    <location>
        <position position="108"/>
    </location>
</feature>
<feature type="active site" evidence="6 10 12">
    <location>
        <position position="278"/>
    </location>
</feature>
<feature type="active site" evidence="7 10 12">
    <location>
        <position position="298"/>
    </location>
</feature>
<feature type="modified residue" description="N6-acetyllysine" evidence="3">
    <location>
        <position position="220"/>
    </location>
</feature>
<feature type="glycosylation site" description="N-linked (GlcNAc...) asparagine" evidence="9">
    <location>
        <position position="192"/>
    </location>
</feature>
<feature type="disulfide bond" evidence="2">
    <location>
        <begin position="93"/>
        <end position="122"/>
    </location>
</feature>
<feature type="disulfide bond" evidence="2">
    <location>
        <begin position="105"/>
        <end position="150"/>
    </location>
</feature>
<feature type="disulfide bond" evidence="2">
    <location>
        <begin position="141"/>
        <end position="207"/>
    </location>
</feature>
<feature type="disulfide bond" evidence="2">
    <location>
        <begin position="142"/>
        <end position="146"/>
    </location>
</feature>
<feature type="disulfide bond" evidence="2">
    <location>
        <begin position="179"/>
        <end position="211"/>
    </location>
</feature>
<feature type="disulfide bond" evidence="2">
    <location>
        <begin position="187"/>
        <end position="198"/>
    </location>
</feature>
<feature type="sequence variant">
    <original>V</original>
    <variation>A</variation>
    <location>
        <position position="302"/>
    </location>
</feature>
<feature type="sequence conflict" description="In Ref. 3; AA sequence." evidence="14" ref="3">
    <original>W</original>
    <variation>G</variation>
    <location>
        <position position="159"/>
    </location>
</feature>
<feature type="helix" evidence="17">
    <location>
        <begin position="28"/>
        <end position="37"/>
    </location>
</feature>
<feature type="strand" evidence="17">
    <location>
        <begin position="40"/>
        <end position="43"/>
    </location>
</feature>
<feature type="helix" evidence="17">
    <location>
        <begin position="52"/>
        <end position="58"/>
    </location>
</feature>
<feature type="turn" evidence="17">
    <location>
        <begin position="75"/>
        <end position="77"/>
    </location>
</feature>
<feature type="helix" evidence="18">
    <location>
        <begin position="86"/>
        <end position="89"/>
    </location>
</feature>
<feature type="turn" evidence="15">
    <location>
        <begin position="90"/>
        <end position="92"/>
    </location>
</feature>
<feature type="turn" evidence="18">
    <location>
        <begin position="94"/>
        <end position="97"/>
    </location>
</feature>
<feature type="strand" evidence="16">
    <location>
        <begin position="104"/>
        <end position="106"/>
    </location>
</feature>
<feature type="helix" evidence="18">
    <location>
        <begin position="108"/>
        <end position="124"/>
    </location>
</feature>
<feature type="turn" evidence="18">
    <location>
        <begin position="125"/>
        <end position="127"/>
    </location>
</feature>
<feature type="helix" evidence="18">
    <location>
        <begin position="135"/>
        <end position="141"/>
    </location>
</feature>
<feature type="helix" evidence="18">
    <location>
        <begin position="144"/>
        <end position="146"/>
    </location>
</feature>
<feature type="helix" evidence="18">
    <location>
        <begin position="149"/>
        <end position="151"/>
    </location>
</feature>
<feature type="helix" evidence="18">
    <location>
        <begin position="155"/>
        <end position="164"/>
    </location>
</feature>
<feature type="strand" evidence="18">
    <location>
        <begin position="178"/>
        <end position="180"/>
    </location>
</feature>
<feature type="strand" evidence="18">
    <location>
        <begin position="188"/>
        <end position="191"/>
    </location>
</feature>
<feature type="strand" evidence="18">
    <location>
        <begin position="193"/>
        <end position="195"/>
    </location>
</feature>
<feature type="helix" evidence="18">
    <location>
        <begin position="220"/>
        <end position="222"/>
    </location>
</feature>
<feature type="strand" evidence="18">
    <location>
        <begin position="226"/>
        <end position="232"/>
    </location>
</feature>
<feature type="helix" evidence="18">
    <location>
        <begin position="236"/>
        <end position="246"/>
    </location>
</feature>
<feature type="strand" evidence="18">
    <location>
        <begin position="249"/>
        <end position="256"/>
    </location>
</feature>
<feature type="helix" evidence="18">
    <location>
        <begin position="257"/>
        <end position="259"/>
    </location>
</feature>
<feature type="strand" evidence="18">
    <location>
        <begin position="264"/>
        <end position="267"/>
    </location>
</feature>
<feature type="strand" evidence="18">
    <location>
        <begin position="274"/>
        <end position="288"/>
    </location>
</feature>
<feature type="strand" evidence="18">
    <location>
        <begin position="291"/>
        <end position="297"/>
    </location>
</feature>
<feature type="strand" evidence="18">
    <location>
        <begin position="309"/>
        <end position="313"/>
    </location>
</feature>
<feature type="helix" evidence="18">
    <location>
        <begin position="318"/>
        <end position="320"/>
    </location>
</feature>
<feature type="turn" evidence="18">
    <location>
        <begin position="321"/>
        <end position="323"/>
    </location>
</feature>
<feature type="strand" evidence="18">
    <location>
        <begin position="325"/>
        <end position="330"/>
    </location>
</feature>
<feature type="helix" evidence="17">
    <location>
        <begin position="333"/>
        <end position="338"/>
    </location>
</feature>
<protein>
    <recommendedName>
        <fullName>Cathepsin B</fullName>
        <ecNumber evidence="8">3.4.22.1</ecNumber>
    </recommendedName>
    <alternativeName>
        <fullName>Cathepsin B1</fullName>
    </alternativeName>
    <alternativeName>
        <fullName>RSG-2</fullName>
    </alternativeName>
    <component>
        <recommendedName>
            <fullName evidence="13">Cathepsin B light chain</fullName>
        </recommendedName>
    </component>
    <component>
        <recommendedName>
            <fullName evidence="13">Cathepsin B heavy chain</fullName>
        </recommendedName>
    </component>
</protein>
<reference key="1">
    <citation type="journal article" date="1994" name="Eur. J. Biochem.">
        <title>Cathepsin B, a cysteine protease implicated in metastatic progression, is also expressed during regression of the rat prostate and mammary glands.</title>
        <authorList>
            <person name="Guenette R.S."/>
            <person name="Mooibroek M."/>
            <person name="Wong K."/>
            <person name="Wong P."/>
            <person name="Tenniswood M."/>
        </authorList>
    </citation>
    <scope>NUCLEOTIDE SEQUENCE [MRNA]</scope>
    <scope>SUBCELLULAR LOCATION</scope>
    <scope>TISSUE SPECIFICITY</scope>
    <scope>INDUCTION</scope>
    <source>
        <strain>Sprague-Dawley</strain>
        <tissue>Mammary gland</tissue>
    </source>
</reference>
<reference key="2">
    <citation type="journal article" date="1985" name="Proc. Natl. Acad. Sci. U.S.A.">
        <title>Identification of cDNA clones encoding a precursor of rat liver cathepsin B.</title>
        <authorList>
            <person name="San Segundo B."/>
            <person name="Chan S.J."/>
            <person name="Steiner D.F."/>
        </authorList>
    </citation>
    <scope>NUCLEOTIDE SEQUENCE [MRNA] OF 69-339</scope>
</reference>
<reference key="3">
    <citation type="journal article" date="1983" name="Proc. Natl. Acad. Sci. U.S.A.">
        <title>Homology of amino acid sequences of rat liver cathepsins B and H with that of papain.</title>
        <authorList>
            <person name="Takio K."/>
            <person name="Towatari T."/>
            <person name="Katunuma N."/>
            <person name="Teller D.C."/>
            <person name="Titani K."/>
        </authorList>
    </citation>
    <scope>PROTEIN SEQUENCE OF 80-126 AND 129-333</scope>
    <scope>GLYCOSYLATION AT ASN-192</scope>
    <source>
        <tissue>Liver</tissue>
    </source>
</reference>
<reference key="4">
    <citation type="submission" date="2009-01" db="UniProtKB">
        <authorList>
            <person name="Lubec G."/>
            <person name="Afjehi-Sadat L."/>
            <person name="Chen W.-Q."/>
        </authorList>
    </citation>
    <scope>PROTEIN SEQUENCE OF 246-263</scope>
    <scope>IDENTIFICATION BY MASS SPECTROMETRY</scope>
    <source>
        <strain>Sprague-Dawley</strain>
        <tissue>Hippocampus</tissue>
        <tissue>Spinal cord</tissue>
    </source>
</reference>
<reference key="5">
    <citation type="journal article" date="1992" name="J. Biol. Chem.">
        <title>Rat procathepsin B. Proteolytic processing to the mature form in vitro.</title>
        <authorList>
            <person name="Rowan A.D."/>
            <person name="Mason P."/>
            <person name="Mach L."/>
            <person name="Mort J.S."/>
        </authorList>
    </citation>
    <scope>PROTEOLYTIC PROCESSING</scope>
    <scope>FUNCTION</scope>
    <scope>CATALYTIC ACTIVITY</scope>
</reference>
<reference key="6">
    <citation type="journal article" date="1995" name="J. Biol. Chem.">
        <title>Crystal structures of recombinant rat cathepsin B and a cathepsin B-inhibitor complex. Implications for structure-based inhibitor design.</title>
        <authorList>
            <person name="Jia Z."/>
            <person name="Hasnain S."/>
            <person name="Hirama T."/>
            <person name="Lee X."/>
            <person name="Mort J.S."/>
            <person name="To R."/>
            <person name="Huber C.P."/>
        </authorList>
    </citation>
    <scope>X-RAY CRYSTALLOGRAPHY (2.2 ANGSTROMS)</scope>
    <scope>ACTIVE SITE</scope>
</reference>
<reference key="7">
    <citation type="journal article" date="1996" name="Structure">
        <title>Structure of rat procathepsin B: model for inhibition of cysteine protease activity by the proregion.</title>
        <authorList>
            <person name="Cygler M."/>
            <person name="Sivaraman J."/>
            <person name="Grochulski P."/>
            <person name="Coulombe R."/>
            <person name="Storer A.C."/>
            <person name="Mort J.S."/>
        </authorList>
    </citation>
    <scope>X-RAY CRYSTALLOGRAPHY (2.8 ANGSTROMS) OF 18-339</scope>
    <scope>ACTIVE SITE</scope>
</reference>
<dbReference type="EC" id="3.4.22.1" evidence="8"/>
<dbReference type="EMBL" id="X82396">
    <property type="protein sequence ID" value="CAA57792.1"/>
    <property type="molecule type" value="mRNA"/>
</dbReference>
<dbReference type="EMBL" id="M11305">
    <property type="protein sequence ID" value="AAA40993.1"/>
    <property type="molecule type" value="mRNA"/>
</dbReference>
<dbReference type="PIR" id="S51041">
    <property type="entry name" value="KHRTB"/>
</dbReference>
<dbReference type="PDB" id="1CPJ">
    <property type="method" value="X-ray"/>
    <property type="resolution" value="2.20 A"/>
    <property type="chains" value="A/B=74-333"/>
</dbReference>
<dbReference type="PDB" id="1CTE">
    <property type="method" value="X-ray"/>
    <property type="resolution" value="2.10 A"/>
    <property type="chains" value="A/B=80-333"/>
</dbReference>
<dbReference type="PDB" id="1MIR">
    <property type="method" value="X-ray"/>
    <property type="resolution" value="2.80 A"/>
    <property type="chains" value="A/B=18-339"/>
</dbReference>
<dbReference type="PDB" id="1THE">
    <property type="method" value="X-ray"/>
    <property type="resolution" value="1.90 A"/>
    <property type="chains" value="A/B=74-333"/>
</dbReference>
<dbReference type="PDBsum" id="1CPJ"/>
<dbReference type="PDBsum" id="1CTE"/>
<dbReference type="PDBsum" id="1MIR"/>
<dbReference type="PDBsum" id="1THE"/>
<dbReference type="SMR" id="P00787"/>
<dbReference type="FunCoup" id="P00787">
    <property type="interactions" value="1923"/>
</dbReference>
<dbReference type="STRING" id="10116.ENSRNOP00000014178"/>
<dbReference type="BindingDB" id="P00787"/>
<dbReference type="ChEMBL" id="CHEMBL2602"/>
<dbReference type="MEROPS" id="C01.060"/>
<dbReference type="GlyCosmos" id="P00787">
    <property type="glycosylation" value="1 site, No reported glycans"/>
</dbReference>
<dbReference type="GlyGen" id="P00787">
    <property type="glycosylation" value="2 sites"/>
</dbReference>
<dbReference type="iPTMnet" id="P00787"/>
<dbReference type="PhosphoSitePlus" id="P00787"/>
<dbReference type="SwissPalm" id="P00787"/>
<dbReference type="jPOST" id="P00787"/>
<dbReference type="PaxDb" id="10116-ENSRNOP00000014178"/>
<dbReference type="UCSC" id="RGD:621509">
    <property type="organism name" value="rat"/>
</dbReference>
<dbReference type="AGR" id="RGD:621509"/>
<dbReference type="RGD" id="621509">
    <property type="gene designation" value="Ctsb"/>
</dbReference>
<dbReference type="eggNOG" id="KOG1543">
    <property type="taxonomic scope" value="Eukaryota"/>
</dbReference>
<dbReference type="InParanoid" id="P00787"/>
<dbReference type="OrthoDB" id="640249at2759"/>
<dbReference type="PhylomeDB" id="P00787"/>
<dbReference type="BRENDA" id="3.4.22.1">
    <property type="organism ID" value="5301"/>
</dbReference>
<dbReference type="Reactome" id="R-RNO-1442490">
    <property type="pathway name" value="Collagen degradation"/>
</dbReference>
<dbReference type="Reactome" id="R-RNO-1679131">
    <property type="pathway name" value="Trafficking and processing of endosomal TLR"/>
</dbReference>
<dbReference type="Reactome" id="R-RNO-2022090">
    <property type="pathway name" value="Assembly of collagen fibrils and other multimeric structures"/>
</dbReference>
<dbReference type="Reactome" id="R-RNO-2132295">
    <property type="pathway name" value="MHC class II antigen presentation"/>
</dbReference>
<dbReference type="Reactome" id="R-RNO-6798695">
    <property type="pathway name" value="Neutrophil degranulation"/>
</dbReference>
<dbReference type="SABIO-RK" id="P00787"/>
<dbReference type="CD-CODE" id="246D7041">
    <property type="entry name" value="Chromatoid body"/>
</dbReference>
<dbReference type="EvolutionaryTrace" id="P00787"/>
<dbReference type="PRO" id="PR:P00787"/>
<dbReference type="Proteomes" id="UP000002494">
    <property type="component" value="Unplaced"/>
</dbReference>
<dbReference type="GO" id="GO:0016324">
    <property type="term" value="C:apical plasma membrane"/>
    <property type="evidence" value="ECO:0000314"/>
    <property type="project" value="RGD"/>
</dbReference>
<dbReference type="GO" id="GO:0005901">
    <property type="term" value="C:caveola"/>
    <property type="evidence" value="ECO:0000314"/>
    <property type="project" value="RGD"/>
</dbReference>
<dbReference type="GO" id="GO:0009986">
    <property type="term" value="C:cell surface"/>
    <property type="evidence" value="ECO:0000314"/>
    <property type="project" value="RGD"/>
</dbReference>
<dbReference type="GO" id="GO:0009897">
    <property type="term" value="C:external side of plasma membrane"/>
    <property type="evidence" value="ECO:0000314"/>
    <property type="project" value="RGD"/>
</dbReference>
<dbReference type="GO" id="GO:0005576">
    <property type="term" value="C:extracellular region"/>
    <property type="evidence" value="ECO:0000314"/>
    <property type="project" value="RGD"/>
</dbReference>
<dbReference type="GO" id="GO:0005615">
    <property type="term" value="C:extracellular space"/>
    <property type="evidence" value="ECO:0000314"/>
    <property type="project" value="RGD"/>
</dbReference>
<dbReference type="GO" id="GO:0005764">
    <property type="term" value="C:lysosome"/>
    <property type="evidence" value="ECO:0000266"/>
    <property type="project" value="RGD"/>
</dbReference>
<dbReference type="GO" id="GO:0042470">
    <property type="term" value="C:melanosome"/>
    <property type="evidence" value="ECO:0007669"/>
    <property type="project" value="UniProtKB-SubCell"/>
</dbReference>
<dbReference type="GO" id="GO:1904090">
    <property type="term" value="C:peptidase inhibitor complex"/>
    <property type="evidence" value="ECO:0000266"/>
    <property type="project" value="RGD"/>
</dbReference>
<dbReference type="GO" id="GO:0048471">
    <property type="term" value="C:perinuclear region of cytoplasm"/>
    <property type="evidence" value="ECO:0000314"/>
    <property type="project" value="RGD"/>
</dbReference>
<dbReference type="GO" id="GO:0042383">
    <property type="term" value="C:sarcolemma"/>
    <property type="evidence" value="ECO:0000314"/>
    <property type="project" value="RGD"/>
</dbReference>
<dbReference type="GO" id="GO:0005518">
    <property type="term" value="F:collagen binding"/>
    <property type="evidence" value="ECO:0000266"/>
    <property type="project" value="RGD"/>
</dbReference>
<dbReference type="GO" id="GO:0004197">
    <property type="term" value="F:cysteine-type endopeptidase activity"/>
    <property type="evidence" value="ECO:0000314"/>
    <property type="project" value="CAFA"/>
</dbReference>
<dbReference type="GO" id="GO:0008234">
    <property type="term" value="F:cysteine-type peptidase activity"/>
    <property type="evidence" value="ECO:0000266"/>
    <property type="project" value="RGD"/>
</dbReference>
<dbReference type="GO" id="GO:0004175">
    <property type="term" value="F:endopeptidase activity"/>
    <property type="evidence" value="ECO:0000314"/>
    <property type="project" value="RGD"/>
</dbReference>
<dbReference type="GO" id="GO:0042802">
    <property type="term" value="F:identical protein binding"/>
    <property type="evidence" value="ECO:0000314"/>
    <property type="project" value="RGD"/>
</dbReference>
<dbReference type="GO" id="GO:0030984">
    <property type="term" value="F:kininogen binding"/>
    <property type="evidence" value="ECO:0000353"/>
    <property type="project" value="RGD"/>
</dbReference>
<dbReference type="GO" id="GO:0008233">
    <property type="term" value="F:peptidase activity"/>
    <property type="evidence" value="ECO:0000266"/>
    <property type="project" value="RGD"/>
</dbReference>
<dbReference type="GO" id="GO:0042277">
    <property type="term" value="F:peptide binding"/>
    <property type="evidence" value="ECO:0000314"/>
    <property type="project" value="RGD"/>
</dbReference>
<dbReference type="GO" id="GO:0044877">
    <property type="term" value="F:protein-containing complex binding"/>
    <property type="evidence" value="ECO:0000353"/>
    <property type="project" value="RGD"/>
</dbReference>
<dbReference type="GO" id="GO:0043394">
    <property type="term" value="F:proteoglycan binding"/>
    <property type="evidence" value="ECO:0000266"/>
    <property type="project" value="RGD"/>
</dbReference>
<dbReference type="GO" id="GO:0006914">
    <property type="term" value="P:autophagy"/>
    <property type="evidence" value="ECO:0000270"/>
    <property type="project" value="RGD"/>
</dbReference>
<dbReference type="GO" id="GO:0071260">
    <property type="term" value="P:cellular response to mechanical stimulus"/>
    <property type="evidence" value="ECO:0000270"/>
    <property type="project" value="RGD"/>
</dbReference>
<dbReference type="GO" id="GO:0097067">
    <property type="term" value="P:cellular response to thyroid hormone stimulus"/>
    <property type="evidence" value="ECO:0000266"/>
    <property type="project" value="RGD"/>
</dbReference>
<dbReference type="GO" id="GO:0030574">
    <property type="term" value="P:collagen catabolic process"/>
    <property type="evidence" value="ECO:0000266"/>
    <property type="project" value="RGD"/>
</dbReference>
<dbReference type="GO" id="GO:0046697">
    <property type="term" value="P:decidualization"/>
    <property type="evidence" value="ECO:0000266"/>
    <property type="project" value="RGD"/>
</dbReference>
<dbReference type="GO" id="GO:0030855">
    <property type="term" value="P:epithelial cell differentiation"/>
    <property type="evidence" value="ECO:0000266"/>
    <property type="project" value="RGD"/>
</dbReference>
<dbReference type="GO" id="GO:0051402">
    <property type="term" value="P:neuron apoptotic process"/>
    <property type="evidence" value="ECO:0000315"/>
    <property type="project" value="RGD"/>
</dbReference>
<dbReference type="GO" id="GO:0030163">
    <property type="term" value="P:protein catabolic process"/>
    <property type="evidence" value="ECO:0000314"/>
    <property type="project" value="RGD"/>
</dbReference>
<dbReference type="GO" id="GO:0006508">
    <property type="term" value="P:proteolysis"/>
    <property type="evidence" value="ECO:0000314"/>
    <property type="project" value="CAFA"/>
</dbReference>
<dbReference type="GO" id="GO:0051603">
    <property type="term" value="P:proteolysis involved in protein catabolic process"/>
    <property type="evidence" value="ECO:0000266"/>
    <property type="project" value="RGD"/>
</dbReference>
<dbReference type="GO" id="GO:0014075">
    <property type="term" value="P:response to amine"/>
    <property type="evidence" value="ECO:0000270"/>
    <property type="project" value="RGD"/>
</dbReference>
<dbReference type="GO" id="GO:0034097">
    <property type="term" value="P:response to cytokine"/>
    <property type="evidence" value="ECO:0000270"/>
    <property type="project" value="RGD"/>
</dbReference>
<dbReference type="GO" id="GO:0071548">
    <property type="term" value="P:response to dexamethasone"/>
    <property type="evidence" value="ECO:0000270"/>
    <property type="project" value="RGD"/>
</dbReference>
<dbReference type="GO" id="GO:0045471">
    <property type="term" value="P:response to ethanol"/>
    <property type="evidence" value="ECO:0000270"/>
    <property type="project" value="RGD"/>
</dbReference>
<dbReference type="GO" id="GO:0009749">
    <property type="term" value="P:response to glucose"/>
    <property type="evidence" value="ECO:0000270"/>
    <property type="project" value="RGD"/>
</dbReference>
<dbReference type="GO" id="GO:0070670">
    <property type="term" value="P:response to interleukin-4"/>
    <property type="evidence" value="ECO:0000270"/>
    <property type="project" value="RGD"/>
</dbReference>
<dbReference type="GO" id="GO:1904373">
    <property type="term" value="P:response to kainic acid"/>
    <property type="evidence" value="ECO:0000270"/>
    <property type="project" value="RGD"/>
</dbReference>
<dbReference type="GO" id="GO:0009612">
    <property type="term" value="P:response to mechanical stimulus"/>
    <property type="evidence" value="ECO:0000270"/>
    <property type="project" value="RGD"/>
</dbReference>
<dbReference type="GO" id="GO:0043434">
    <property type="term" value="P:response to peptide hormone"/>
    <property type="evidence" value="ECO:0000270"/>
    <property type="project" value="RGD"/>
</dbReference>
<dbReference type="GO" id="GO:0007519">
    <property type="term" value="P:skeletal muscle tissue development"/>
    <property type="evidence" value="ECO:0000270"/>
    <property type="project" value="RGD"/>
</dbReference>
<dbReference type="GO" id="GO:0007283">
    <property type="term" value="P:spermatogenesis"/>
    <property type="evidence" value="ECO:0000270"/>
    <property type="project" value="RGD"/>
</dbReference>
<dbReference type="GO" id="GO:0046718">
    <property type="term" value="P:symbiont entry into host cell"/>
    <property type="evidence" value="ECO:0000266"/>
    <property type="project" value="RGD"/>
</dbReference>
<dbReference type="GO" id="GO:0006590">
    <property type="term" value="P:thyroid hormone generation"/>
    <property type="evidence" value="ECO:0000266"/>
    <property type="project" value="RGD"/>
</dbReference>
<dbReference type="CDD" id="cd02620">
    <property type="entry name" value="Peptidase_C1A_CathepsinB"/>
    <property type="match status" value="1"/>
</dbReference>
<dbReference type="FunFam" id="3.90.70.10:FF:000031">
    <property type="entry name" value="Cathepsin B"/>
    <property type="match status" value="1"/>
</dbReference>
<dbReference type="Gene3D" id="3.90.70.10">
    <property type="entry name" value="Cysteine proteinases"/>
    <property type="match status" value="1"/>
</dbReference>
<dbReference type="InterPro" id="IPR038765">
    <property type="entry name" value="Papain-like_cys_pep_sf"/>
</dbReference>
<dbReference type="InterPro" id="IPR025661">
    <property type="entry name" value="Pept_asp_AS"/>
</dbReference>
<dbReference type="InterPro" id="IPR000169">
    <property type="entry name" value="Pept_cys_AS"/>
</dbReference>
<dbReference type="InterPro" id="IPR025660">
    <property type="entry name" value="Pept_his_AS"/>
</dbReference>
<dbReference type="InterPro" id="IPR013128">
    <property type="entry name" value="Peptidase_C1A"/>
</dbReference>
<dbReference type="InterPro" id="IPR000668">
    <property type="entry name" value="Peptidase_C1A_C"/>
</dbReference>
<dbReference type="InterPro" id="IPR012599">
    <property type="entry name" value="Propeptide_C1A"/>
</dbReference>
<dbReference type="PANTHER" id="PTHR12411">
    <property type="entry name" value="CYSTEINE PROTEASE FAMILY C1-RELATED"/>
    <property type="match status" value="1"/>
</dbReference>
<dbReference type="Pfam" id="PF00112">
    <property type="entry name" value="Peptidase_C1"/>
    <property type="match status" value="1"/>
</dbReference>
<dbReference type="Pfam" id="PF08127">
    <property type="entry name" value="Propeptide_C1"/>
    <property type="match status" value="1"/>
</dbReference>
<dbReference type="PRINTS" id="PR00705">
    <property type="entry name" value="PAPAIN"/>
</dbReference>
<dbReference type="SMART" id="SM00645">
    <property type="entry name" value="Pept_C1"/>
    <property type="match status" value="1"/>
</dbReference>
<dbReference type="SUPFAM" id="SSF54001">
    <property type="entry name" value="Cysteine proteinases"/>
    <property type="match status" value="1"/>
</dbReference>
<dbReference type="PROSITE" id="PS00640">
    <property type="entry name" value="THIOL_PROTEASE_ASN"/>
    <property type="match status" value="1"/>
</dbReference>
<dbReference type="PROSITE" id="PS00139">
    <property type="entry name" value="THIOL_PROTEASE_CYS"/>
    <property type="match status" value="1"/>
</dbReference>
<dbReference type="PROSITE" id="PS00639">
    <property type="entry name" value="THIOL_PROTEASE_HIS"/>
    <property type="match status" value="1"/>
</dbReference>
<comment type="function">
    <text evidence="2 3 8">Thiol protease which is believed to participate in intracellular degradation and turnover of proteins (PubMed:1639824). Cleaves matrix extracellular phosphoglycoprotein MEPE (By similarity). Involved in the solubilization of cross-linked TG/thyroglobulin in the thyroid follicle lumen (By similarity). Has also been implicated in tumor invasion and metastasis (By similarity).</text>
</comment>
<comment type="catalytic activity">
    <reaction evidence="8">
        <text>Hydrolysis of proteins with broad specificity for peptide bonds. Preferentially cleaves -Arg-Arg-|-Xaa bonds in small molecule substrates (thus differing from cathepsin L). In addition to being an endopeptidase, shows peptidyl-dipeptidase activity, liberating C-terminal dipeptides.</text>
        <dbReference type="EC" id="3.4.22.1"/>
    </reaction>
</comment>
<comment type="subunit">
    <text evidence="2">Dimer of a heavy chain and a light chain cross-linked by a disulfide bond. Interacts with SRPX2. Directly interacts with SHKBP1.</text>
</comment>
<comment type="subcellular location">
    <subcellularLocation>
        <location evidence="11">Lysosome</location>
    </subcellularLocation>
    <subcellularLocation>
        <location evidence="2">Melanosome</location>
    </subcellularLocation>
    <subcellularLocation>
        <location evidence="1">Secreted</location>
        <location evidence="1">Extracellular space</location>
    </subcellularLocation>
    <subcellularLocation>
        <location evidence="3">Apical cell membrane</location>
        <topology evidence="3">Peripheral membrane protein</topology>
        <orientation evidence="3">Extracellular side</orientation>
    </subcellularLocation>
    <text evidence="3">Localizes to the lumen of thyroid follicles and to the apical membrane of thyroid epithelial cells.</text>
</comment>
<comment type="tissue specificity">
    <text evidence="11">Expressed in the epithelial cells of the prostate and mammary gland.</text>
</comment>
<comment type="induction">
    <text evidence="11">Expression is low in the lactacting mammary gland but increases after weaning to a peak 4 days post weaning. Expression returns to baseline levels 6 days post weaning.</text>
</comment>
<comment type="similarity">
    <text evidence="5 6 7">Belongs to the peptidase C1 family.</text>
</comment>
<sequence length="339" mass="37470">MWWSLIPLSCLLALTSAHDKPSSHPLSDDMINYINKQNTTWQAGRNFYNVDISYLKKLCGTVLGGPNLPERVGFSEDINLPESFDAREQWSNCPTIAQIRDQGSCGSCWAFGAVEAMSDRICIHTNGRVNVEVSAEDLLTCCGIQCGDGCNGGYPSGAWNFWTRKGLVSGGVYNSHIGCLPYTIPPCEHHVNGSRPPCTGEGDTPKCNKMCEAGYSTSYKEDKHYGYTSYSVSDSEKEIMAEIYKNGPVEGAFTVFSDFLTYKSGVYKHEAGDVMGGHAIRILGWGIENGVPYWLVANSWNVDWGDNGFFKILRGENHCGIESEIVAGIPRTQQYWGRF</sequence>
<gene>
    <name type="primary">Ctsb</name>
</gene>